<organism>
    <name type="scientific">Arabidopsis thaliana</name>
    <name type="common">Mouse-ear cress</name>
    <dbReference type="NCBI Taxonomy" id="3702"/>
    <lineage>
        <taxon>Eukaryota</taxon>
        <taxon>Viridiplantae</taxon>
        <taxon>Streptophyta</taxon>
        <taxon>Embryophyta</taxon>
        <taxon>Tracheophyta</taxon>
        <taxon>Spermatophyta</taxon>
        <taxon>Magnoliopsida</taxon>
        <taxon>eudicotyledons</taxon>
        <taxon>Gunneridae</taxon>
        <taxon>Pentapetalae</taxon>
        <taxon>rosids</taxon>
        <taxon>malvids</taxon>
        <taxon>Brassicales</taxon>
        <taxon>Brassicaceae</taxon>
        <taxon>Camelineae</taxon>
        <taxon>Arabidopsis</taxon>
    </lineage>
</organism>
<keyword id="KW-0129">CBS domain</keyword>
<keyword id="KW-0325">Glycoprotein</keyword>
<keyword id="KW-0472">Membrane</keyword>
<keyword id="KW-0597">Phosphoprotein</keyword>
<keyword id="KW-1185">Reference proteome</keyword>
<keyword id="KW-0677">Repeat</keyword>
<keyword id="KW-0812">Transmembrane</keyword>
<keyword id="KW-1133">Transmembrane helix</keyword>
<proteinExistence type="evidence at transcript level"/>
<reference key="1">
    <citation type="journal article" date="1998" name="Nature">
        <title>Analysis of 1.9 Mb of contiguous sequence from chromosome 4 of Arabidopsis thaliana.</title>
        <authorList>
            <person name="Bevan M."/>
            <person name="Bancroft I."/>
            <person name="Bent E."/>
            <person name="Love K."/>
            <person name="Goodman H.M."/>
            <person name="Dean C."/>
            <person name="Bergkamp R."/>
            <person name="Dirkse W."/>
            <person name="van Staveren M."/>
            <person name="Stiekema W."/>
            <person name="Drost L."/>
            <person name="Ridley P."/>
            <person name="Hudson S.-A."/>
            <person name="Patel K."/>
            <person name="Murphy G."/>
            <person name="Piffanelli P."/>
            <person name="Wedler H."/>
            <person name="Wedler E."/>
            <person name="Wambutt R."/>
            <person name="Weitzenegger T."/>
            <person name="Pohl T."/>
            <person name="Terryn N."/>
            <person name="Gielen J."/>
            <person name="Villarroel R."/>
            <person name="De Clercq R."/>
            <person name="van Montagu M."/>
            <person name="Lecharny A."/>
            <person name="Aubourg S."/>
            <person name="Gy I."/>
            <person name="Kreis M."/>
            <person name="Lao N."/>
            <person name="Kavanagh T."/>
            <person name="Hempel S."/>
            <person name="Kotter P."/>
            <person name="Entian K.-D."/>
            <person name="Rieger M."/>
            <person name="Schaefer M."/>
            <person name="Funk B."/>
            <person name="Mueller-Auer S."/>
            <person name="Silvey M."/>
            <person name="James R."/>
            <person name="Monfort A."/>
            <person name="Pons A."/>
            <person name="Puigdomenech P."/>
            <person name="Douka A."/>
            <person name="Voukelatou E."/>
            <person name="Milioni D."/>
            <person name="Hatzopoulos P."/>
            <person name="Piravandi E."/>
            <person name="Obermaier B."/>
            <person name="Hilbert H."/>
            <person name="Duesterhoeft A."/>
            <person name="Moores T."/>
            <person name="Jones J.D.G."/>
            <person name="Eneva T."/>
            <person name="Palme K."/>
            <person name="Benes V."/>
            <person name="Rechmann S."/>
            <person name="Ansorge W."/>
            <person name="Cooke R."/>
            <person name="Berger C."/>
            <person name="Delseny M."/>
            <person name="Voet M."/>
            <person name="Volckaert G."/>
            <person name="Mewes H.-W."/>
            <person name="Klosterman S."/>
            <person name="Schueller C."/>
            <person name="Chalwatzis N."/>
        </authorList>
    </citation>
    <scope>NUCLEOTIDE SEQUENCE [LARGE SCALE GENOMIC DNA]</scope>
    <source>
        <strain>cv. Columbia</strain>
    </source>
</reference>
<reference key="2">
    <citation type="journal article" date="1999" name="Nature">
        <title>Sequence and analysis of chromosome 4 of the plant Arabidopsis thaliana.</title>
        <authorList>
            <person name="Mayer K.F.X."/>
            <person name="Schueller C."/>
            <person name="Wambutt R."/>
            <person name="Murphy G."/>
            <person name="Volckaert G."/>
            <person name="Pohl T."/>
            <person name="Duesterhoeft A."/>
            <person name="Stiekema W."/>
            <person name="Entian K.-D."/>
            <person name="Terryn N."/>
            <person name="Harris B."/>
            <person name="Ansorge W."/>
            <person name="Brandt P."/>
            <person name="Grivell L.A."/>
            <person name="Rieger M."/>
            <person name="Weichselgartner M."/>
            <person name="de Simone V."/>
            <person name="Obermaier B."/>
            <person name="Mache R."/>
            <person name="Mueller M."/>
            <person name="Kreis M."/>
            <person name="Delseny M."/>
            <person name="Puigdomenech P."/>
            <person name="Watson M."/>
            <person name="Schmidtheini T."/>
            <person name="Reichert B."/>
            <person name="Portetelle D."/>
            <person name="Perez-Alonso M."/>
            <person name="Boutry M."/>
            <person name="Bancroft I."/>
            <person name="Vos P."/>
            <person name="Hoheisel J."/>
            <person name="Zimmermann W."/>
            <person name="Wedler H."/>
            <person name="Ridley P."/>
            <person name="Langham S.-A."/>
            <person name="McCullagh B."/>
            <person name="Bilham L."/>
            <person name="Robben J."/>
            <person name="van der Schueren J."/>
            <person name="Grymonprez B."/>
            <person name="Chuang Y.-J."/>
            <person name="Vandenbussche F."/>
            <person name="Braeken M."/>
            <person name="Weltjens I."/>
            <person name="Voet M."/>
            <person name="Bastiaens I."/>
            <person name="Aert R."/>
            <person name="Defoor E."/>
            <person name="Weitzenegger T."/>
            <person name="Bothe G."/>
            <person name="Ramsperger U."/>
            <person name="Hilbert H."/>
            <person name="Braun M."/>
            <person name="Holzer E."/>
            <person name="Brandt A."/>
            <person name="Peters S."/>
            <person name="van Staveren M."/>
            <person name="Dirkse W."/>
            <person name="Mooijman P."/>
            <person name="Klein Lankhorst R."/>
            <person name="Rose M."/>
            <person name="Hauf J."/>
            <person name="Koetter P."/>
            <person name="Berneiser S."/>
            <person name="Hempel S."/>
            <person name="Feldpausch M."/>
            <person name="Lamberth S."/>
            <person name="Van den Daele H."/>
            <person name="De Keyser A."/>
            <person name="Buysshaert C."/>
            <person name="Gielen J."/>
            <person name="Villarroel R."/>
            <person name="De Clercq R."/>
            <person name="van Montagu M."/>
            <person name="Rogers J."/>
            <person name="Cronin A."/>
            <person name="Quail M.A."/>
            <person name="Bray-Allen S."/>
            <person name="Clark L."/>
            <person name="Doggett J."/>
            <person name="Hall S."/>
            <person name="Kay M."/>
            <person name="Lennard N."/>
            <person name="McLay K."/>
            <person name="Mayes R."/>
            <person name="Pettett A."/>
            <person name="Rajandream M.A."/>
            <person name="Lyne M."/>
            <person name="Benes V."/>
            <person name="Rechmann S."/>
            <person name="Borkova D."/>
            <person name="Bloecker H."/>
            <person name="Scharfe M."/>
            <person name="Grimm M."/>
            <person name="Loehnert T.-H."/>
            <person name="Dose S."/>
            <person name="de Haan M."/>
            <person name="Maarse A.C."/>
            <person name="Schaefer M."/>
            <person name="Mueller-Auer S."/>
            <person name="Gabel C."/>
            <person name="Fuchs M."/>
            <person name="Fartmann B."/>
            <person name="Granderath K."/>
            <person name="Dauner D."/>
            <person name="Herzl A."/>
            <person name="Neumann S."/>
            <person name="Argiriou A."/>
            <person name="Vitale D."/>
            <person name="Liguori R."/>
            <person name="Piravandi E."/>
            <person name="Massenet O."/>
            <person name="Quigley F."/>
            <person name="Clabauld G."/>
            <person name="Muendlein A."/>
            <person name="Felber R."/>
            <person name="Schnabl S."/>
            <person name="Hiller R."/>
            <person name="Schmidt W."/>
            <person name="Lecharny A."/>
            <person name="Aubourg S."/>
            <person name="Chefdor F."/>
            <person name="Cooke R."/>
            <person name="Berger C."/>
            <person name="Monfort A."/>
            <person name="Casacuberta E."/>
            <person name="Gibbons T."/>
            <person name="Weber N."/>
            <person name="Vandenbol M."/>
            <person name="Bargues M."/>
            <person name="Terol J."/>
            <person name="Torres A."/>
            <person name="Perez-Perez A."/>
            <person name="Purnelle B."/>
            <person name="Bent E."/>
            <person name="Johnson S."/>
            <person name="Tacon D."/>
            <person name="Jesse T."/>
            <person name="Heijnen L."/>
            <person name="Schwarz S."/>
            <person name="Scholler P."/>
            <person name="Heber S."/>
            <person name="Francs P."/>
            <person name="Bielke C."/>
            <person name="Frishman D."/>
            <person name="Haase D."/>
            <person name="Lemcke K."/>
            <person name="Mewes H.-W."/>
            <person name="Stocker S."/>
            <person name="Zaccaria P."/>
            <person name="Bevan M."/>
            <person name="Wilson R.K."/>
            <person name="de la Bastide M."/>
            <person name="Habermann K."/>
            <person name="Parnell L."/>
            <person name="Dedhia N."/>
            <person name="Gnoj L."/>
            <person name="Schutz K."/>
            <person name="Huang E."/>
            <person name="Spiegel L."/>
            <person name="Sekhon M."/>
            <person name="Murray J."/>
            <person name="Sheet P."/>
            <person name="Cordes M."/>
            <person name="Abu-Threideh J."/>
            <person name="Stoneking T."/>
            <person name="Kalicki J."/>
            <person name="Graves T."/>
            <person name="Harmon G."/>
            <person name="Edwards J."/>
            <person name="Latreille P."/>
            <person name="Courtney L."/>
            <person name="Cloud J."/>
            <person name="Abbott A."/>
            <person name="Scott K."/>
            <person name="Johnson D."/>
            <person name="Minx P."/>
            <person name="Bentley D."/>
            <person name="Fulton B."/>
            <person name="Miller N."/>
            <person name="Greco T."/>
            <person name="Kemp K."/>
            <person name="Kramer J."/>
            <person name="Fulton L."/>
            <person name="Mardis E."/>
            <person name="Dante M."/>
            <person name="Pepin K."/>
            <person name="Hillier L.W."/>
            <person name="Nelson J."/>
            <person name="Spieth J."/>
            <person name="Ryan E."/>
            <person name="Andrews S."/>
            <person name="Geisel C."/>
            <person name="Layman D."/>
            <person name="Du H."/>
            <person name="Ali J."/>
            <person name="Berghoff A."/>
            <person name="Jones K."/>
            <person name="Drone K."/>
            <person name="Cotton M."/>
            <person name="Joshu C."/>
            <person name="Antonoiu B."/>
            <person name="Zidanic M."/>
            <person name="Strong C."/>
            <person name="Sun H."/>
            <person name="Lamar B."/>
            <person name="Yordan C."/>
            <person name="Ma P."/>
            <person name="Zhong J."/>
            <person name="Preston R."/>
            <person name="Vil D."/>
            <person name="Shekher M."/>
            <person name="Matero A."/>
            <person name="Shah R."/>
            <person name="Swaby I.K."/>
            <person name="O'Shaughnessy A."/>
            <person name="Rodriguez M."/>
            <person name="Hoffman J."/>
            <person name="Till S."/>
            <person name="Granat S."/>
            <person name="Shohdy N."/>
            <person name="Hasegawa A."/>
            <person name="Hameed A."/>
            <person name="Lodhi M."/>
            <person name="Johnson A."/>
            <person name="Chen E."/>
            <person name="Marra M.A."/>
            <person name="Martienssen R."/>
            <person name="McCombie W.R."/>
        </authorList>
    </citation>
    <scope>NUCLEOTIDE SEQUENCE [LARGE SCALE GENOMIC DNA]</scope>
    <source>
        <strain>cv. Columbia</strain>
    </source>
</reference>
<reference key="3">
    <citation type="journal article" date="2017" name="Plant J.">
        <title>Araport11: a complete reannotation of the Arabidopsis thaliana reference genome.</title>
        <authorList>
            <person name="Cheng C.Y."/>
            <person name="Krishnakumar V."/>
            <person name="Chan A.P."/>
            <person name="Thibaud-Nissen F."/>
            <person name="Schobel S."/>
            <person name="Town C.D."/>
        </authorList>
    </citation>
    <scope>GENOME REANNOTATION</scope>
    <source>
        <strain>cv. Columbia</strain>
    </source>
</reference>
<reference key="4">
    <citation type="submission" date="2005-05" db="EMBL/GenBank/DDBJ databases">
        <title>Arabidopsis ORF clones.</title>
        <authorList>
            <person name="Kim C.J."/>
            <person name="Chen H."/>
            <person name="Cheuk R.F."/>
            <person name="Shinn P."/>
            <person name="Ecker J.R."/>
        </authorList>
    </citation>
    <scope>NUCLEOTIDE SEQUENCE [LARGE SCALE MRNA]</scope>
    <source>
        <strain>cv. Columbia</strain>
    </source>
</reference>
<reference key="5">
    <citation type="submission" date="2006-07" db="EMBL/GenBank/DDBJ databases">
        <title>Large-scale analysis of RIKEN Arabidopsis full-length (RAFL) cDNAs.</title>
        <authorList>
            <person name="Totoki Y."/>
            <person name="Seki M."/>
            <person name="Ishida J."/>
            <person name="Nakajima M."/>
            <person name="Enju A."/>
            <person name="Kamiya A."/>
            <person name="Narusaka M."/>
            <person name="Shin-i T."/>
            <person name="Nakagawa M."/>
            <person name="Sakamoto N."/>
            <person name="Oishi K."/>
            <person name="Kohara Y."/>
            <person name="Kobayashi M."/>
            <person name="Toyoda A."/>
            <person name="Sakaki Y."/>
            <person name="Sakurai T."/>
            <person name="Iida K."/>
            <person name="Akiyama K."/>
            <person name="Satou M."/>
            <person name="Toyoda T."/>
            <person name="Konagaya A."/>
            <person name="Carninci P."/>
            <person name="Kawai J."/>
            <person name="Hayashizaki Y."/>
            <person name="Shinozaki K."/>
        </authorList>
    </citation>
    <scope>NUCLEOTIDE SEQUENCE [LARGE SCALE MRNA]</scope>
    <source>
        <strain>cv. Columbia</strain>
    </source>
</reference>
<reference key="6">
    <citation type="journal article" date="2009" name="BMC Genomics">
        <title>Genome wide expression analysis of CBS domain containing proteins in Arabidopsis thaliana (L.) Heynh and Oryza sativa L. reveals their developmental and stress regulation.</title>
        <authorList>
            <person name="Kushwaha H.R."/>
            <person name="Singh A.K."/>
            <person name="Sopory S.K."/>
            <person name="Singla-Pareek S.L."/>
            <person name="Pareek A."/>
        </authorList>
    </citation>
    <scope>GENE FAMILY</scope>
    <scope>NOMENCLATURE</scope>
</reference>
<dbReference type="EMBL" id="Z97335">
    <property type="protein sequence ID" value="CAB10202.1"/>
    <property type="status" value="ALT_SEQ"/>
    <property type="molecule type" value="Genomic_DNA"/>
</dbReference>
<dbReference type="EMBL" id="AL161538">
    <property type="protein sequence ID" value="CAB78465.1"/>
    <property type="status" value="ALT_SEQ"/>
    <property type="molecule type" value="Genomic_DNA"/>
</dbReference>
<dbReference type="EMBL" id="CP002687">
    <property type="protein sequence ID" value="AEE83398.1"/>
    <property type="molecule type" value="Genomic_DNA"/>
</dbReference>
<dbReference type="EMBL" id="BT023429">
    <property type="protein sequence ID" value="AAY56420.1"/>
    <property type="molecule type" value="mRNA"/>
</dbReference>
<dbReference type="EMBL" id="AK226439">
    <property type="protein sequence ID" value="BAE98582.1"/>
    <property type="molecule type" value="mRNA"/>
</dbReference>
<dbReference type="PIR" id="H71403">
    <property type="entry name" value="H71403"/>
</dbReference>
<dbReference type="RefSeq" id="NP_193159.3">
    <property type="nucleotide sequence ID" value="NM_117500.6"/>
</dbReference>
<dbReference type="SMR" id="Q4V3C7"/>
<dbReference type="BioGRID" id="12361">
    <property type="interactions" value="1"/>
</dbReference>
<dbReference type="FunCoup" id="Q4V3C7">
    <property type="interactions" value="1106"/>
</dbReference>
<dbReference type="STRING" id="3702.Q4V3C7"/>
<dbReference type="GlyCosmos" id="Q4V3C7">
    <property type="glycosylation" value="2 sites, No reported glycans"/>
</dbReference>
<dbReference type="GlyGen" id="Q4V3C7">
    <property type="glycosylation" value="2 sites"/>
</dbReference>
<dbReference type="iPTMnet" id="Q4V3C7"/>
<dbReference type="PaxDb" id="3702-AT4G14230.1"/>
<dbReference type="ProteomicsDB" id="242826"/>
<dbReference type="EnsemblPlants" id="AT4G14230.1">
    <property type="protein sequence ID" value="AT4G14230.1"/>
    <property type="gene ID" value="AT4G14230"/>
</dbReference>
<dbReference type="GeneID" id="827064"/>
<dbReference type="Gramene" id="AT4G14230.1">
    <property type="protein sequence ID" value="AT4G14230.1"/>
    <property type="gene ID" value="AT4G14230"/>
</dbReference>
<dbReference type="KEGG" id="ath:AT4G14230"/>
<dbReference type="Araport" id="AT4G14230"/>
<dbReference type="TAIR" id="AT4G14230"/>
<dbReference type="eggNOG" id="KOG2118">
    <property type="taxonomic scope" value="Eukaryota"/>
</dbReference>
<dbReference type="HOGENOM" id="CLU_011310_0_0_1"/>
<dbReference type="InParanoid" id="Q4V3C7"/>
<dbReference type="OMA" id="NTFESNA"/>
<dbReference type="OrthoDB" id="5353557at2759"/>
<dbReference type="PhylomeDB" id="Q4V3C7"/>
<dbReference type="PRO" id="PR:Q4V3C7"/>
<dbReference type="Proteomes" id="UP000006548">
    <property type="component" value="Chromosome 4"/>
</dbReference>
<dbReference type="ExpressionAtlas" id="Q4V3C7">
    <property type="expression patterns" value="baseline and differential"/>
</dbReference>
<dbReference type="GO" id="GO:0005829">
    <property type="term" value="C:cytosol"/>
    <property type="evidence" value="ECO:0007005"/>
    <property type="project" value="TAIR"/>
</dbReference>
<dbReference type="GO" id="GO:0016020">
    <property type="term" value="C:membrane"/>
    <property type="evidence" value="ECO:0007669"/>
    <property type="project" value="UniProtKB-SubCell"/>
</dbReference>
<dbReference type="GO" id="GO:0005739">
    <property type="term" value="C:mitochondrion"/>
    <property type="evidence" value="ECO:0007005"/>
    <property type="project" value="TAIR"/>
</dbReference>
<dbReference type="GO" id="GO:0010960">
    <property type="term" value="P:magnesium ion homeostasis"/>
    <property type="evidence" value="ECO:0007669"/>
    <property type="project" value="InterPro"/>
</dbReference>
<dbReference type="CDD" id="cd04590">
    <property type="entry name" value="CBS_pair_CorC_HlyC_assoc"/>
    <property type="match status" value="1"/>
</dbReference>
<dbReference type="FunFam" id="3.10.580.10:FF:000021">
    <property type="entry name" value="DUF21 domain-containing protein At4g14240-like"/>
    <property type="match status" value="1"/>
</dbReference>
<dbReference type="Gene3D" id="3.10.580.10">
    <property type="entry name" value="CBS-domain"/>
    <property type="match status" value="2"/>
</dbReference>
<dbReference type="InterPro" id="IPR045095">
    <property type="entry name" value="ACDP"/>
</dbReference>
<dbReference type="InterPro" id="IPR000644">
    <property type="entry name" value="CBS_dom"/>
</dbReference>
<dbReference type="InterPro" id="IPR046342">
    <property type="entry name" value="CBS_dom_sf"/>
</dbReference>
<dbReference type="InterPro" id="IPR002550">
    <property type="entry name" value="CNNM"/>
</dbReference>
<dbReference type="InterPro" id="IPR044751">
    <property type="entry name" value="Ion_transp-like_CBS"/>
</dbReference>
<dbReference type="PANTHER" id="PTHR12064:SF75">
    <property type="entry name" value="CNNM TRANSMEMBRANE DOMAIN-CONTAINING PROTEIN"/>
    <property type="match status" value="1"/>
</dbReference>
<dbReference type="PANTHER" id="PTHR12064">
    <property type="entry name" value="METAL TRANSPORTER CNNM"/>
    <property type="match status" value="1"/>
</dbReference>
<dbReference type="Pfam" id="PF01595">
    <property type="entry name" value="CNNM"/>
    <property type="match status" value="1"/>
</dbReference>
<dbReference type="SUPFAM" id="SSF54631">
    <property type="entry name" value="CBS-domain pair"/>
    <property type="match status" value="1"/>
</dbReference>
<dbReference type="PROSITE" id="PS51371">
    <property type="entry name" value="CBS"/>
    <property type="match status" value="1"/>
</dbReference>
<dbReference type="PROSITE" id="PS51846">
    <property type="entry name" value="CNNM"/>
    <property type="match status" value="1"/>
</dbReference>
<evidence type="ECO:0000250" key="1">
    <source>
        <dbReference type="UniProtKB" id="Q8VZI2"/>
    </source>
</evidence>
<evidence type="ECO:0000255" key="2"/>
<evidence type="ECO:0000255" key="3">
    <source>
        <dbReference type="PROSITE-ProRule" id="PRU00703"/>
    </source>
</evidence>
<evidence type="ECO:0000255" key="4">
    <source>
        <dbReference type="PROSITE-ProRule" id="PRU01193"/>
    </source>
</evidence>
<evidence type="ECO:0000256" key="5">
    <source>
        <dbReference type="SAM" id="MobiDB-lite"/>
    </source>
</evidence>
<evidence type="ECO:0000305" key="6"/>
<accession>Q4V3C7</accession>
<accession>O23281</accession>
<feature type="chain" id="PRO_0000411679" description="DUF21 domain-containing protein At4g14230">
    <location>
        <begin position="1"/>
        <end position="495"/>
    </location>
</feature>
<feature type="topological domain" description="Extracellular" evidence="2">
    <location>
        <begin position="1"/>
        <end position="42"/>
    </location>
</feature>
<feature type="transmembrane region" description="Helical" evidence="2">
    <location>
        <begin position="43"/>
        <end position="63"/>
    </location>
</feature>
<feature type="topological domain" description="Cytoplasmic" evidence="2">
    <location>
        <begin position="64"/>
        <end position="92"/>
    </location>
</feature>
<feature type="transmembrane region" description="Helical" evidence="2">
    <location>
        <begin position="93"/>
        <end position="113"/>
    </location>
</feature>
<feature type="topological domain" description="Extracellular" evidence="2">
    <location>
        <begin position="114"/>
        <end position="120"/>
    </location>
</feature>
<feature type="transmembrane region" description="Helical" evidence="2">
    <location>
        <begin position="121"/>
        <end position="141"/>
    </location>
</feature>
<feature type="topological domain" description="Cytoplasmic" evidence="2">
    <location>
        <begin position="142"/>
        <end position="146"/>
    </location>
</feature>
<feature type="transmembrane region" description="Helical" evidence="2">
    <location>
        <begin position="147"/>
        <end position="167"/>
    </location>
</feature>
<feature type="topological domain" description="Extracellular" evidence="2">
    <location>
        <begin position="168"/>
        <end position="495"/>
    </location>
</feature>
<feature type="domain" description="CNNM transmembrane" evidence="4">
    <location>
        <begin position="30"/>
        <end position="212"/>
    </location>
</feature>
<feature type="domain" description="CBS 1" evidence="3">
    <location>
        <begin position="231"/>
        <end position="291"/>
    </location>
</feature>
<feature type="domain" description="CBS 2" evidence="3">
    <location>
        <begin position="296"/>
        <end position="356"/>
    </location>
</feature>
<feature type="domain" description="CBS 3" evidence="3">
    <location>
        <begin position="357"/>
        <end position="426"/>
    </location>
</feature>
<feature type="region of interest" description="Disordered" evidence="5">
    <location>
        <begin position="330"/>
        <end position="354"/>
    </location>
</feature>
<feature type="region of interest" description="Disordered" evidence="5">
    <location>
        <begin position="455"/>
        <end position="495"/>
    </location>
</feature>
<feature type="compositionally biased region" description="Low complexity" evidence="5">
    <location>
        <begin position="456"/>
        <end position="477"/>
    </location>
</feature>
<feature type="modified residue" description="Phosphoserine" evidence="1">
    <location>
        <position position="352"/>
    </location>
</feature>
<feature type="glycosylation site" description="N-linked (GlcNAc...) asparagine" evidence="2">
    <location>
        <position position="349"/>
    </location>
</feature>
<feature type="glycosylation site" description="N-linked (GlcNAc...) asparagine" evidence="2">
    <location>
        <position position="353"/>
    </location>
</feature>
<sequence length="495" mass="53492">MHPINAVVAARMLAGISQSNALQSEAIPFGSLEWITYAGISCFLVLFAGIMSGLTLGLMSLGLVELEILQRSGTPKEKKQSAAIFPVVQKQHQLLVTLLLFNALAMEGLPIYLDKIFNEYVAIILSVTFVLFVGEVIPQAICTRYGLAVGANLVWLVRILMVLSYPISFPIAKMLDWVLGHNDPLFRRAQLKALVSIHGEAAGKGGELTHDETTIISGALDLTEKTAQEAMTPIESTFSLDVNSKLDREAMDKIQARGHSRVPVYSDNPKNVIGLLLVKSLLTVRPETGTLVSAVGIRRIPRVPANMPLYDILNEFQKGSSHMAAVVKVKGKSKGHPSTLHEENSGESNVSSNNSELTAPLLLKREGNHDSVIVRIDKANGQSFISEAGRQGFSHTSEEIEDGDVIGIITLEDVFEELLQEEIVDETDEYIDVHKRIRVATVAAVAISSLARAPSGRRLLGPKGSGGPKTPKASSTPKPDDKLMGTMTGPPQGNN</sequence>
<protein>
    <recommendedName>
        <fullName>DUF21 domain-containing protein At4g14230</fullName>
    </recommendedName>
    <alternativeName>
        <fullName>CBS domain-containing protein CBSDUF2</fullName>
    </alternativeName>
</protein>
<name>Y4423_ARATH</name>
<comment type="subcellular location">
    <subcellularLocation>
        <location evidence="6">Membrane</location>
        <topology evidence="6">Multi-pass membrane protein</topology>
    </subcellularLocation>
</comment>
<comment type="sequence caution" evidence="6">
    <conflict type="erroneous gene model prediction">
        <sequence resource="EMBL-CDS" id="CAB10202"/>
    </conflict>
</comment>
<comment type="sequence caution" evidence="6">
    <conflict type="erroneous gene model prediction">
        <sequence resource="EMBL-CDS" id="CAB78465"/>
    </conflict>
</comment>
<gene>
    <name type="primary">CBSDUF2</name>
    <name type="ordered locus">At4g14230</name>
    <name type="ORF">dl3155c</name>
    <name type="ORF">FCAALL.147</name>
</gene>